<evidence type="ECO:0000255" key="1">
    <source>
        <dbReference type="HAMAP-Rule" id="MF_01151"/>
    </source>
</evidence>
<evidence type="ECO:0000256" key="2">
    <source>
        <dbReference type="SAM" id="MobiDB-lite"/>
    </source>
</evidence>
<name>GRPE_CLOB8</name>
<comment type="function">
    <text evidence="1">Participates actively in the response to hyperosmotic and heat shock by preventing the aggregation of stress-denatured proteins, in association with DnaK and GrpE. It is the nucleotide exchange factor for DnaK and may function as a thermosensor. Unfolded proteins bind initially to DnaJ; upon interaction with the DnaJ-bound protein, DnaK hydrolyzes its bound ATP, resulting in the formation of a stable complex. GrpE releases ADP from DnaK; ATP binding to DnaK triggers the release of the substrate protein, thus completing the reaction cycle. Several rounds of ATP-dependent interactions between DnaJ, DnaK and GrpE are required for fully efficient folding.</text>
</comment>
<comment type="subunit">
    <text evidence="1">Homodimer.</text>
</comment>
<comment type="subcellular location">
    <subcellularLocation>
        <location evidence="1">Cytoplasm</location>
    </subcellularLocation>
</comment>
<comment type="similarity">
    <text evidence="1">Belongs to the GrpE family.</text>
</comment>
<organism>
    <name type="scientific">Clostridium beijerinckii (strain ATCC 51743 / NCIMB 8052)</name>
    <name type="common">Clostridium acetobutylicum</name>
    <dbReference type="NCBI Taxonomy" id="290402"/>
    <lineage>
        <taxon>Bacteria</taxon>
        <taxon>Bacillati</taxon>
        <taxon>Bacillota</taxon>
        <taxon>Clostridia</taxon>
        <taxon>Eubacteriales</taxon>
        <taxon>Clostridiaceae</taxon>
        <taxon>Clostridium</taxon>
    </lineage>
</organism>
<accession>A6LRN3</accession>
<dbReference type="EMBL" id="CP000721">
    <property type="protein sequence ID" value="ABR33013.1"/>
    <property type="molecule type" value="Genomic_DNA"/>
</dbReference>
<dbReference type="RefSeq" id="WP_011968173.1">
    <property type="nucleotide sequence ID" value="NC_009617.1"/>
</dbReference>
<dbReference type="SMR" id="A6LRN3"/>
<dbReference type="GeneID" id="66343770"/>
<dbReference type="KEGG" id="cbe:Cbei_0829"/>
<dbReference type="eggNOG" id="COG0576">
    <property type="taxonomic scope" value="Bacteria"/>
</dbReference>
<dbReference type="HOGENOM" id="CLU_057217_5_0_9"/>
<dbReference type="Proteomes" id="UP000000565">
    <property type="component" value="Chromosome"/>
</dbReference>
<dbReference type="GO" id="GO:0005737">
    <property type="term" value="C:cytoplasm"/>
    <property type="evidence" value="ECO:0007669"/>
    <property type="project" value="UniProtKB-SubCell"/>
</dbReference>
<dbReference type="GO" id="GO:0000774">
    <property type="term" value="F:adenyl-nucleotide exchange factor activity"/>
    <property type="evidence" value="ECO:0007669"/>
    <property type="project" value="InterPro"/>
</dbReference>
<dbReference type="GO" id="GO:0042803">
    <property type="term" value="F:protein homodimerization activity"/>
    <property type="evidence" value="ECO:0007669"/>
    <property type="project" value="InterPro"/>
</dbReference>
<dbReference type="GO" id="GO:0051087">
    <property type="term" value="F:protein-folding chaperone binding"/>
    <property type="evidence" value="ECO:0007669"/>
    <property type="project" value="InterPro"/>
</dbReference>
<dbReference type="GO" id="GO:0051082">
    <property type="term" value="F:unfolded protein binding"/>
    <property type="evidence" value="ECO:0007669"/>
    <property type="project" value="TreeGrafter"/>
</dbReference>
<dbReference type="GO" id="GO:0006457">
    <property type="term" value="P:protein folding"/>
    <property type="evidence" value="ECO:0007669"/>
    <property type="project" value="InterPro"/>
</dbReference>
<dbReference type="CDD" id="cd00446">
    <property type="entry name" value="GrpE"/>
    <property type="match status" value="1"/>
</dbReference>
<dbReference type="FunFam" id="2.30.22.10:FF:000001">
    <property type="entry name" value="Protein GrpE"/>
    <property type="match status" value="1"/>
</dbReference>
<dbReference type="Gene3D" id="3.90.20.20">
    <property type="match status" value="1"/>
</dbReference>
<dbReference type="Gene3D" id="2.30.22.10">
    <property type="entry name" value="Head domain of nucleotide exchange factor GrpE"/>
    <property type="match status" value="1"/>
</dbReference>
<dbReference type="HAMAP" id="MF_01151">
    <property type="entry name" value="GrpE"/>
    <property type="match status" value="1"/>
</dbReference>
<dbReference type="InterPro" id="IPR000740">
    <property type="entry name" value="GrpE"/>
</dbReference>
<dbReference type="InterPro" id="IPR013805">
    <property type="entry name" value="GrpE_coiled_coil"/>
</dbReference>
<dbReference type="InterPro" id="IPR009012">
    <property type="entry name" value="GrpE_head"/>
</dbReference>
<dbReference type="NCBIfam" id="NF010738">
    <property type="entry name" value="PRK14140.1"/>
    <property type="match status" value="1"/>
</dbReference>
<dbReference type="NCBIfam" id="NF010757">
    <property type="entry name" value="PRK14160.1"/>
    <property type="match status" value="1"/>
</dbReference>
<dbReference type="PANTHER" id="PTHR21237">
    <property type="entry name" value="GRPE PROTEIN"/>
    <property type="match status" value="1"/>
</dbReference>
<dbReference type="PANTHER" id="PTHR21237:SF23">
    <property type="entry name" value="GRPE PROTEIN HOMOLOG, MITOCHONDRIAL"/>
    <property type="match status" value="1"/>
</dbReference>
<dbReference type="Pfam" id="PF01025">
    <property type="entry name" value="GrpE"/>
    <property type="match status" value="1"/>
</dbReference>
<dbReference type="PRINTS" id="PR00773">
    <property type="entry name" value="GRPEPROTEIN"/>
</dbReference>
<dbReference type="SUPFAM" id="SSF58014">
    <property type="entry name" value="Coiled-coil domain of nucleotide exchange factor GrpE"/>
    <property type="match status" value="1"/>
</dbReference>
<dbReference type="SUPFAM" id="SSF51064">
    <property type="entry name" value="Head domain of nucleotide exchange factor GrpE"/>
    <property type="match status" value="1"/>
</dbReference>
<dbReference type="PROSITE" id="PS01071">
    <property type="entry name" value="GRPE"/>
    <property type="match status" value="1"/>
</dbReference>
<reference key="1">
    <citation type="submission" date="2007-06" db="EMBL/GenBank/DDBJ databases">
        <title>Complete sequence of Clostridium beijerinckii NCIMB 8052.</title>
        <authorList>
            <consortium name="US DOE Joint Genome Institute"/>
            <person name="Copeland A."/>
            <person name="Lucas S."/>
            <person name="Lapidus A."/>
            <person name="Barry K."/>
            <person name="Detter J.C."/>
            <person name="Glavina del Rio T."/>
            <person name="Hammon N."/>
            <person name="Israni S."/>
            <person name="Dalin E."/>
            <person name="Tice H."/>
            <person name="Pitluck S."/>
            <person name="Sims D."/>
            <person name="Brettin T."/>
            <person name="Bruce D."/>
            <person name="Tapia R."/>
            <person name="Brainard J."/>
            <person name="Schmutz J."/>
            <person name="Larimer F."/>
            <person name="Land M."/>
            <person name="Hauser L."/>
            <person name="Kyrpides N."/>
            <person name="Mikhailova N."/>
            <person name="Bennet G."/>
            <person name="Cann I."/>
            <person name="Chen J.-S."/>
            <person name="Contreras A.L."/>
            <person name="Jones D."/>
            <person name="Kashket E."/>
            <person name="Mitchell W."/>
            <person name="Stoddard S."/>
            <person name="Schwarz W."/>
            <person name="Qureshi N."/>
            <person name="Young M."/>
            <person name="Shi Z."/>
            <person name="Ezeji T."/>
            <person name="White B."/>
            <person name="Blaschek H."/>
            <person name="Richardson P."/>
        </authorList>
    </citation>
    <scope>NUCLEOTIDE SEQUENCE [LARGE SCALE GENOMIC DNA]</scope>
    <source>
        <strain>ATCC 51743 / NCIMB 8052</strain>
    </source>
</reference>
<feature type="chain" id="PRO_1000085108" description="Protein GrpE">
    <location>
        <begin position="1"/>
        <end position="207"/>
    </location>
</feature>
<feature type="region of interest" description="Disordered" evidence="2">
    <location>
        <begin position="1"/>
        <end position="66"/>
    </location>
</feature>
<feature type="compositionally biased region" description="Basic and acidic residues" evidence="2">
    <location>
        <begin position="1"/>
        <end position="11"/>
    </location>
</feature>
<feature type="compositionally biased region" description="Basic and acidic residues" evidence="2">
    <location>
        <begin position="57"/>
        <end position="66"/>
    </location>
</feature>
<protein>
    <recommendedName>
        <fullName evidence="1">Protein GrpE</fullName>
    </recommendedName>
    <alternativeName>
        <fullName evidence="1">HSP-70 cofactor</fullName>
    </alternativeName>
</protein>
<proteinExistence type="inferred from homology"/>
<sequence>MEENRDVKNEELEKEEIADEVAEKDNETQESNDAAETNEASKEASENIEAAEEDQEDLVKNQEEENKKLREELDATKDRLLRLTAEYDNYRKRTAKEKEGIYSDAYVDVLKEIVPILDNLERAVAADGSIEDLKKGIEMTIKGCKDSFAKLGVEEIDATGEFDPNLHNAVMHIEDEELGKNVVAEVFQKGYKKDDKIIRHTMVKVAN</sequence>
<gene>
    <name evidence="1" type="primary">grpE</name>
    <name type="ordered locus">Cbei_0829</name>
</gene>
<keyword id="KW-0143">Chaperone</keyword>
<keyword id="KW-0963">Cytoplasm</keyword>
<keyword id="KW-0346">Stress response</keyword>